<comment type="function">
    <molecule>Methyltransferase/Protease/Ubiquitinyl hydrolase</molecule>
    <text evidence="9 10 11 12 13 14 16 17">Acts as a cysteine protease, methyltransferase and deubiquitinase (Probable) (PubMed:22117220, PubMed:23966860, PubMed:29117247, PubMed:32732284). The cysteine protease activity cleaves the polyprotein giving rise to mature proteins (PubMed:23966860). The protease has the ability to process substrates in trans (PubMed:17686855). The methyltransferase domain is probably involved in viral RNA capping (Probable). The deubiquitylating activity counteracts the degradation of the viral polymerase mediated by the host ubiquitin-proteasome system (PubMed:22117220). The polymerase is thus stabilized and infectivity is increased (PubMed:22117220). Favors K63 poly-Ub linkage (PubMed:23345508).</text>
</comment>
<comment type="function">
    <molecule>RNA-directed RNA polymerase</molecule>
    <text evidence="2 10">RNA-directed RNA polymerase is responsible for the replication and transcription of the genome.</text>
</comment>
<comment type="catalytic activity">
    <molecule>Methyltransferase/Protease/Ubiquitinyl hydrolase</molecule>
    <reaction evidence="9 10 11">
        <text>Thiol-dependent hydrolysis of ester, thioester, amide, peptide and isopeptide bonds formed by the C-terminal Gly of ubiquitin (a 76-residue protein attached to proteins as an intracellular targeting signal).</text>
        <dbReference type="EC" id="3.4.19.12"/>
    </reaction>
</comment>
<comment type="catalytic activity">
    <molecule>RNA-directed RNA polymerase</molecule>
    <reaction evidence="2">
        <text>RNA(n) + a ribonucleoside 5'-triphosphate = RNA(n+1) + diphosphate</text>
        <dbReference type="Rhea" id="RHEA:21248"/>
        <dbReference type="Rhea" id="RHEA-COMP:14527"/>
        <dbReference type="Rhea" id="RHEA-COMP:17342"/>
        <dbReference type="ChEBI" id="CHEBI:33019"/>
        <dbReference type="ChEBI" id="CHEBI:61557"/>
        <dbReference type="ChEBI" id="CHEBI:140395"/>
        <dbReference type="EC" id="2.7.7.48"/>
    </reaction>
</comment>
<comment type="biophysicochemical properties">
    <molecule>Methyltransferase/Protease/Ubiquitinyl hydrolase</molecule>
    <kinetics>
        <KM evidence="11">70.2 uM for Ub-AMC</KM>
    </kinetics>
</comment>
<comment type="subunit">
    <molecule>Methyltransferase/Protease/Ubiquitinyl hydrolase</molecule>
    <text evidence="14">Interacts with host ubiquitin.</text>
</comment>
<comment type="subcellular location">
    <molecule>Methyltransferase/Protease/Ubiquitinyl hydrolase</molecule>
    <subcellularLocation>
        <location evidence="9">Host chloroplast envelope</location>
    </subcellularLocation>
</comment>
<comment type="subcellular location">
    <molecule>Putative helicase</molecule>
    <subcellularLocation>
        <location evidence="8">Host chloroplast envelope</location>
    </subcellularLocation>
</comment>
<comment type="subcellular location">
    <molecule>RNA-directed RNA polymerase</molecule>
    <subcellularLocation>
        <location evidence="7 8">Host chloroplast envelope</location>
    </subcellularLocation>
</comment>
<comment type="domain">
    <molecule>Methyltransferase/Protease/Ubiquitinyl hydrolase</molecule>
    <text evidence="11 13">The viral OTU domain (vOTU) is responsible for the deubiquitination activity (PubMed:23345508). Both protease (PRO) and deubiquitination (DUB) activities rely on the single catalytic site of the cysteine proteinase (PubMed:29117247). The switch in the PRO/DUB activities is due to the mobility of a GPP flap (PubMed:29117247).</text>
</comment>
<comment type="PTM">
    <text evidence="9">Specific enzymatic cleavages by the host yield mature proteins.</text>
</comment>
<comment type="miscellaneous">
    <molecule>Methyltransferase/Protease/Ubiquitinyl hydrolase</molecule>
    <text evidence="10 11 12">The deubiquitinase activity is low compared to that of Bunyaviruses or coronaviruses.</text>
</comment>
<comment type="similarity">
    <text evidence="16">Belongs to the Tymoviridae non-structural replication polyprotein family.</text>
</comment>
<organism>
    <name type="scientific">Turnip yellow mosaic virus</name>
    <dbReference type="NCBI Taxonomy" id="12154"/>
    <lineage>
        <taxon>Viruses</taxon>
        <taxon>Riboviria</taxon>
        <taxon>Orthornavirae</taxon>
        <taxon>Kitrinoviricota</taxon>
        <taxon>Alsuviricetes</taxon>
        <taxon>Tymovirales</taxon>
        <taxon>Tymoviridae</taxon>
        <taxon>Tymovirus</taxon>
        <taxon>Tymovirus brassicae</taxon>
    </lineage>
</organism>
<organismHost>
    <name type="scientific">Brassica</name>
    <dbReference type="NCBI Taxonomy" id="3705"/>
</organismHost>
<organismHost>
    <name type="scientific">Brassica rapa subsp. pekinensis</name>
    <name type="common">Chinese cabbage</name>
    <name type="synonym">Brassica pekinensis</name>
    <dbReference type="NCBI Taxonomy" id="51351"/>
</organismHost>
<organismHost>
    <name type="scientific">Cardamine lilacina</name>
    <dbReference type="NCBI Taxonomy" id="82359"/>
</organismHost>
<accession>P10358</accession>
<name>POLN_TYMV</name>
<sequence>MAFQLALDALAPTTHRDPSLHPILESTVDSIRSSIQTYPWSIPKELLPLLNSYGIPTSGLGTSHHPHAAHKTIETFLLCTHWSFQATTPSSVMFMKPSKFNKLAQVNSNFRELKNYRLHPNDSTRYPFTSPDLPVFPTIFMHDALMYYHPSQIMDLFLRKPNLERLYASLVVPPEAHLSDQSFYPKLYTYTTTRHTLHYVPEGHEAGSYNQPSDAHSWLRINSIRLGNHHLSVTILESWGPVHSLLIQRGTPPPDPSLQAPPTLMTSDLFRSYQEPRLDVVSFRIPDAIELPQATFLQQPLRDRLVPRAVYNALFTYTRAVRTLRTSDPAAFVRMHSSKPDHDWVTSNAWDNLQTFALLNVPLRPNVVYHVLQSPIASLSLYLRQHWRRLTATAVPILSFLTLLQRFLPLPIPLAEVKSITAFRRELYRKKEPHHPLDVFHLQHRVRNYHSAISAVRPASPPHQKLPHALQKAALLLLRPISPLLTATPFFRSEQKSMLPNAELSWTLKRFALPWQASLVLLALSESSILLHKLFSPPTLQAQHDTYHRHLHPGSYSLQWERTPLSIPRTTAFLPFTPTTSTAPPDRSEASLPPAFASTFVPRPPPAASSPGAQPPTTTAAPPTPIEPTQRTHQNSDLALESSTSTEPPPPPIRSPDMTPSAPVLFPEINSPRRFPPQLPATPDLEPAHTPPPLSIPHQDPTDSADPLMGSHLLHHSLPAPPTHPLPSSQLLPAPLTNDPTAIGPVLPFEELHPRRYPENTATFLTRLRSLPSNHLPQPTLNCLLSAVSDQTKVSEEHLWESLQTILPDSQLSNEETNTLGLSTEHLTALAHLYNFQATVYSDRGPILFGPSDTIKRIDITHTTGPPSHFSPGKRLLGSQPSAKGHPSDPLIRAMKSFKVSGNYLPFSEAHNHPTSISHAKNLISNMKNGFDGVLSLLDVSTGQRTGPTPKERIIQIDHYLDTNPGKTTPVVHFAGFAGCGKTYPIQQLLKTKLFKDFRVSCPTTELRTEWKTAMELHGSQSWRFNTWESSILKSSRILVIDEIYKMPRGYLDLSILADPALELVIILGDPLQGEYHSQSKDSSNHRLPSETLRLLPYIDMYCWWSYRIPQCIARLFQIHSFNAWQGVIGSVSTPHDQSPVLTNSHASSLTFNSLGYRSCTISSSQGLTFCDPAIIVLDNYTKWLSSANGLVALTRSRSGVQFMGPSSYVGGTNGSSAMFSDAFNNSLIIMDRYFPSLFPQLKLITSPLTTRGPKLNGATPSASPTHRSPNFHLPPHIPLSYDRDFVTVNPTLPDQGPETRLDTHFLPPSRLPLHFDLPPAITPPPVSTSVDPPQAKASPVYPGEFFDSLAAFFLPAHDPSTREILHKDQSSNQFPWFDRPFSLSCQPSSLISAKHAPNHDPTLLPASINKRLRFRPSDSPHQITADDVVLGLQLFHSLCRAYSRQPNSTVPFNPELFAECISLNEYAQLSSKTQSTIVANASRSDPDWRHTTVKIFAKAQHKVNDGSIFGSWKACQTLALMHDYVILVLGPVKKYQRIFDNADRPPNIYSHCGKTPNQLRDWCQEHLTHSTPKIANDYTAFDQSQHGESVVLEALKMKRLNIPSHLIQLHVHLKTNVSTQFGPLTCMRLTGEPGTYDDNTDYNLAVIYSQYDVGSCPIMVSGDDSLIDHPLPTRHDWPSVLKRLHLRFKLELTSHPLFCGYYVGPAGCIRNPLALFCKLMIAVDDDALDDRRLSYLTEFTTGHLLGESLWHLLPETHVQYQSACFDFFCRRCPRHEKMLLDDSTPALSLLERITSSPRWLTKNAMYLLPAKLRLAITSLSQTQSFPESIEVSHAESELLHYVQ</sequence>
<protein>
    <recommendedName>
        <fullName evidence="16">Non-structural replication polyprotein</fullName>
    </recommendedName>
    <alternativeName>
        <fullName>206 kDa polyprotein</fullName>
    </alternativeName>
    <alternativeName>
        <fullName>206K</fullName>
    </alternativeName>
    <component>
        <recommendedName>
            <fullName>Methyltransferase/Protease/Ubiquitinyl hydrolase</fullName>
            <ecNumber>2.1.1.-</ecNumber>
            <ecNumber evidence="10 11 12">3.4.19.12</ecNumber>
            <ecNumber evidence="9 10 11">3.4.22.-</ecNumber>
        </recommendedName>
        <alternativeName>
            <fullName evidence="15">98 kDa protein</fullName>
        </alternativeName>
        <alternativeName>
            <fullName>MET/PRO</fullName>
        </alternativeName>
    </component>
    <component>
        <recommendedName>
            <fullName>Putative helicase</fullName>
            <ecNumber>3.6.4.-</ecNumber>
        </recommendedName>
        <alternativeName>
            <fullName evidence="15">42 kDa protein</fullName>
        </alternativeName>
        <alternativeName>
            <fullName>HEL</fullName>
        </alternativeName>
    </component>
    <component>
        <recommendedName>
            <fullName>RNA-directed RNA polymerase</fullName>
            <ecNumber>2.7.7.48</ecNumber>
        </recommendedName>
        <alternativeName>
            <fullName evidence="15">66 kDa protein</fullName>
        </alternativeName>
        <alternativeName>
            <fullName>POL</fullName>
        </alternativeName>
    </component>
</protein>
<keyword id="KW-0002">3D-structure</keyword>
<keyword id="KW-0067">ATP-binding</keyword>
<keyword id="KW-0945">Host-virus interaction</keyword>
<keyword id="KW-0378">Hydrolase</keyword>
<keyword id="KW-0489">Methyltransferase</keyword>
<keyword id="KW-1127">Modulation of host ubiquitin pathway by viral deubiquitinase</keyword>
<keyword id="KW-1130">Modulation of host ubiquitin pathway by virus</keyword>
<keyword id="KW-0511">Multifunctional enzyme</keyword>
<keyword id="KW-0547">Nucleotide-binding</keyword>
<keyword id="KW-0548">Nucleotidyltransferase</keyword>
<keyword id="KW-0645">Protease</keyword>
<keyword id="KW-1185">Reference proteome</keyword>
<keyword id="KW-0696">RNA-directed RNA polymerase</keyword>
<keyword id="KW-0788">Thiol protease</keyword>
<keyword id="KW-0808">Transferase</keyword>
<keyword id="KW-0693">Viral RNA replication</keyword>
<dbReference type="EC" id="2.1.1.-"/>
<dbReference type="EC" id="3.4.19.12" evidence="10 11 12"/>
<dbReference type="EC" id="3.4.22.-" evidence="9 10 11"/>
<dbReference type="EC" id="3.6.4.-"/>
<dbReference type="EC" id="2.7.7.48"/>
<dbReference type="EMBL" id="X07441">
    <property type="protein sequence ID" value="CAA30322.1"/>
    <property type="status" value="ALT_SEQ"/>
    <property type="molecule type" value="Genomic_RNA"/>
</dbReference>
<dbReference type="PIR" id="S01956">
    <property type="entry name" value="S01956"/>
</dbReference>
<dbReference type="RefSeq" id="NP_663297.1">
    <property type="nucleotide sequence ID" value="NC_004063.1"/>
</dbReference>
<dbReference type="PDB" id="4A5U">
    <property type="method" value="X-ray"/>
    <property type="resolution" value="2.00 A"/>
    <property type="chains" value="A=728-879"/>
</dbReference>
<dbReference type="PDB" id="5LW5">
    <property type="method" value="X-ray"/>
    <property type="resolution" value="1.65 A"/>
    <property type="chains" value="A/B=728-874"/>
</dbReference>
<dbReference type="PDB" id="5LWA">
    <property type="method" value="X-ray"/>
    <property type="resolution" value="1.65 A"/>
    <property type="chains" value="A/B=728-879"/>
</dbReference>
<dbReference type="PDB" id="6YPT">
    <property type="method" value="X-ray"/>
    <property type="resolution" value="3.66 A"/>
    <property type="chains" value="A/C=728-879"/>
</dbReference>
<dbReference type="PDB" id="9CSH">
    <property type="method" value="X-ray"/>
    <property type="resolution" value="2.80 A"/>
    <property type="chains" value="A/C=728-879"/>
</dbReference>
<dbReference type="PDBsum" id="4A5U"/>
<dbReference type="PDBsum" id="5LW5"/>
<dbReference type="PDBsum" id="5LWA"/>
<dbReference type="PDBsum" id="6YPT"/>
<dbReference type="PDBsum" id="9CSH"/>
<dbReference type="SMR" id="P10358"/>
<dbReference type="MEROPS" id="C21.001"/>
<dbReference type="GeneID" id="951158"/>
<dbReference type="KEGG" id="vg:951158"/>
<dbReference type="EvolutionaryTrace" id="P10358"/>
<dbReference type="Proteomes" id="UP000000401">
    <property type="component" value="Genome"/>
</dbReference>
<dbReference type="GO" id="GO:0005524">
    <property type="term" value="F:ATP binding"/>
    <property type="evidence" value="ECO:0007669"/>
    <property type="project" value="UniProtKB-KW"/>
</dbReference>
<dbReference type="GO" id="GO:0004197">
    <property type="term" value="F:cysteine-type endopeptidase activity"/>
    <property type="evidence" value="ECO:0007669"/>
    <property type="project" value="InterPro"/>
</dbReference>
<dbReference type="GO" id="GO:0008174">
    <property type="term" value="F:mRNA methyltransferase activity"/>
    <property type="evidence" value="ECO:0007669"/>
    <property type="project" value="InterPro"/>
</dbReference>
<dbReference type="GO" id="GO:0003723">
    <property type="term" value="F:RNA binding"/>
    <property type="evidence" value="ECO:0007669"/>
    <property type="project" value="InterPro"/>
</dbReference>
<dbReference type="GO" id="GO:0003968">
    <property type="term" value="F:RNA-directed RNA polymerase activity"/>
    <property type="evidence" value="ECO:0007669"/>
    <property type="project" value="UniProtKB-KW"/>
</dbReference>
<dbReference type="GO" id="GO:0006351">
    <property type="term" value="P:DNA-templated transcription"/>
    <property type="evidence" value="ECO:0007669"/>
    <property type="project" value="InterPro"/>
</dbReference>
<dbReference type="GO" id="GO:0032259">
    <property type="term" value="P:methylation"/>
    <property type="evidence" value="ECO:0007669"/>
    <property type="project" value="UniProtKB-KW"/>
</dbReference>
<dbReference type="GO" id="GO:0016556">
    <property type="term" value="P:mRNA modification"/>
    <property type="evidence" value="ECO:0007669"/>
    <property type="project" value="InterPro"/>
</dbReference>
<dbReference type="GO" id="GO:0006508">
    <property type="term" value="P:proteolysis"/>
    <property type="evidence" value="ECO:0007669"/>
    <property type="project" value="UniProtKB-KW"/>
</dbReference>
<dbReference type="GO" id="GO:0006396">
    <property type="term" value="P:RNA processing"/>
    <property type="evidence" value="ECO:0007669"/>
    <property type="project" value="InterPro"/>
</dbReference>
<dbReference type="GO" id="GO:0039648">
    <property type="term" value="P:symbiont-mediated perturbation of host ubiquitin-like protein modification"/>
    <property type="evidence" value="ECO:0007669"/>
    <property type="project" value="UniProtKB-KW"/>
</dbReference>
<dbReference type="GO" id="GO:0039694">
    <property type="term" value="P:viral RNA genome replication"/>
    <property type="evidence" value="ECO:0007669"/>
    <property type="project" value="InterPro"/>
</dbReference>
<dbReference type="CDD" id="cd23247">
    <property type="entry name" value="Tymoviridae_RdRp"/>
    <property type="match status" value="1"/>
</dbReference>
<dbReference type="Gene3D" id="3.90.70.100">
    <property type="match status" value="1"/>
</dbReference>
<dbReference type="Gene3D" id="3.40.50.300">
    <property type="entry name" value="P-loop containing nucleotide triphosphate hydrolases"/>
    <property type="match status" value="1"/>
</dbReference>
<dbReference type="InterPro" id="IPR027351">
    <property type="entry name" value="(+)RNA_virus_helicase_core_dom"/>
</dbReference>
<dbReference type="InterPro" id="IPR002588">
    <property type="entry name" value="Alphavirus-like_MT_dom"/>
</dbReference>
<dbReference type="InterPro" id="IPR043502">
    <property type="entry name" value="DNA/RNA_pol_sf"/>
</dbReference>
<dbReference type="InterPro" id="IPR027417">
    <property type="entry name" value="P-loop_NTPase"/>
</dbReference>
<dbReference type="InterPro" id="IPR008043">
    <property type="entry name" value="Peptidase_C21"/>
</dbReference>
<dbReference type="InterPro" id="IPR001788">
    <property type="entry name" value="RNA-dep_RNA_pol_alsuvir"/>
</dbReference>
<dbReference type="InterPro" id="IPR007094">
    <property type="entry name" value="RNA-dir_pol_PSvirus"/>
</dbReference>
<dbReference type="InterPro" id="IPR043629">
    <property type="entry name" value="Salyut_dom"/>
</dbReference>
<dbReference type="InterPro" id="IPR043181">
    <property type="entry name" value="TYMV_endopept_dom"/>
</dbReference>
<dbReference type="Pfam" id="PF05381">
    <property type="entry name" value="Peptidase_C21"/>
    <property type="match status" value="1"/>
</dbReference>
<dbReference type="Pfam" id="PF00978">
    <property type="entry name" value="RdRP_2"/>
    <property type="match status" value="1"/>
</dbReference>
<dbReference type="Pfam" id="PF19227">
    <property type="entry name" value="Salyut"/>
    <property type="match status" value="1"/>
</dbReference>
<dbReference type="Pfam" id="PF01443">
    <property type="entry name" value="Viral_helicase1"/>
    <property type="match status" value="1"/>
</dbReference>
<dbReference type="Pfam" id="PF01660">
    <property type="entry name" value="Vmethyltransf"/>
    <property type="match status" value="1"/>
</dbReference>
<dbReference type="SUPFAM" id="SSF56672">
    <property type="entry name" value="DNA/RNA polymerases"/>
    <property type="match status" value="1"/>
</dbReference>
<dbReference type="PROSITE" id="PS51743">
    <property type="entry name" value="ALPHAVIRUS_MT"/>
    <property type="match status" value="1"/>
</dbReference>
<dbReference type="PROSITE" id="PS51738">
    <property type="entry name" value="PEPTIDASE_C21"/>
    <property type="match status" value="1"/>
</dbReference>
<dbReference type="PROSITE" id="PS51657">
    <property type="entry name" value="PSRV_HELICASE"/>
    <property type="match status" value="1"/>
</dbReference>
<dbReference type="PROSITE" id="PS50507">
    <property type="entry name" value="RDRP_SSRNA_POS"/>
    <property type="match status" value="1"/>
</dbReference>
<proteinExistence type="evidence at protein level"/>
<reference key="1">
    <citation type="journal article" date="1988" name="Nucleic Acids Res.">
        <title>Overlapping open reading frames revealed by complete nucleotide sequencing of turnip yellow mosaic virus genomic RNA.</title>
        <authorList>
            <person name="Morch M.D."/>
            <person name="Boyer J.C."/>
            <person name="Haenni A.L."/>
        </authorList>
    </citation>
    <scope>NUCLEOTIDE SEQUENCE [GENOMIC RNA]</scope>
</reference>
<reference key="2">
    <citation type="journal article" date="2001" name="Virology">
        <title>Detection and subcellular localization of the turnip yellow mosaic virus 66K replication protein in infected cells.</title>
        <authorList>
            <person name="Prod'homme D."/>
            <person name="Le Panse S."/>
            <person name="Drugeon G."/>
            <person name="Jupin I."/>
        </authorList>
    </citation>
    <scope>SUBCELLULAR LOCATION (RNA-DIRECTED RNA POLYMERASE)</scope>
</reference>
<reference key="3">
    <citation type="journal article" date="2003" name="J. Virol.">
        <title>Targeting of the turnip yellow mosaic virus 66K replication protein to the chloroplast envelope is mediated by the 140K protein.</title>
        <authorList>
            <person name="Prod'homme D."/>
            <person name="Jakubiec A."/>
            <person name="Tournier V."/>
            <person name="Drugeon G."/>
            <person name="Jupin I."/>
        </authorList>
    </citation>
    <scope>SUBCELLULAR LOCATION (METHYLTRANSFERASE/PROTEASE/UBIQUITINYL HYDROLASE)</scope>
</reference>
<reference key="4">
    <citation type="journal article" date="2007" name="J. Virol.">
        <title>Proteolytic processing of turnip yellow mosaic virus replication proteins and functional impact on infectivity.</title>
        <authorList>
            <person name="Jakubiec A."/>
            <person name="Drugeon G."/>
            <person name="Camborde L."/>
            <person name="Jupin I."/>
        </authorList>
    </citation>
    <scope>PROTEOLYTIC CLEAVAGE (NONSTRUCTURAL REPLICATION POLYPROTEIN)</scope>
    <scope>SUBCELLULAR LOCATION(METHYLTRANSFERASE/PROTEASE/UBIQUITINYL HYDROLASE)</scope>
    <scope>FUNCTION (METHYLTRANSFERASE/PROTEASE/UBIQUITINYL HYDROLASE)</scope>
    <scope>CATALYTIC ACTIVITY (METHYLTRANSFERASE/PROTEASE/UBIQUITINYL HYDROLASE)</scope>
    <scope>MUTAGENESIS OF CYS-783</scope>
    <scope>ACTIVE SITE (METHYLTRANSFERASE/PROTEASE/UBIQUITINYL HYDROLASE)</scope>
</reference>
<reference key="5">
    <citation type="journal article" date="2012" name="EMBO J.">
        <title>A viral deubiquitylating enzyme targets viral RNA-dependent RNA polymerase and affects viral infectivity.</title>
        <authorList>
            <person name="Chenon M."/>
            <person name="Camborde L."/>
            <person name="Cheminant S."/>
            <person name="Jupin I."/>
        </authorList>
    </citation>
    <scope>FUNCTION (METHYLTRANSFERASE/PROTEASE/UBIQUITINYL HYDROLASE)</scope>
    <scope>CATALYTIC ACTIVITY (METHYLTRANSFERASE/PROTEASE/UBIQUITINYL HYDROLASE)</scope>
</reference>
<reference key="6">
    <citation type="journal article" date="2013" name="J. Virol.">
        <title>Diversity of ubiquitin and ISG15 specificity among nairoviruses' viral ovarian tumor domain proteases.</title>
        <authorList>
            <person name="Capodagli G.C."/>
            <person name="Deaton M.K."/>
            <person name="Baker E.A."/>
            <person name="Lumpkin R.J."/>
            <person name="Pegan S.D."/>
        </authorList>
    </citation>
    <scope>CATALYTIC ACTIVITY (METHYLTRANSFERASE/PROTEASE/UBIQUITINYL HYDROLASE)</scope>
    <scope>FUNCTION (METHYLTRANSFERASE/PROTEASE/UBIQUITINYL HYDROLASE)</scope>
    <scope>BIOPHYSICOCHEMICAL PROPERTIES (METHYLTRANSFERASE/PROTEASE/UBIQUITINYL HYDROLASE)</scope>
    <scope>MUTAGENESIS OF GLU-10; SER-101 AND THR-128</scope>
</reference>
<reference evidence="18" key="7">
    <citation type="journal article" date="2013" name="PLoS Pathog.">
        <title>A compact viral processing proteinase/ubiquitin hydrolase from the OTU family.</title>
        <authorList>
            <person name="Lombardi C."/>
            <person name="Ayach M."/>
            <person name="Beaurepaire L."/>
            <person name="Chenon M."/>
            <person name="Andreani J."/>
            <person name="Guerois R."/>
            <person name="Jupin I."/>
            <person name="Bressanelli S."/>
        </authorList>
    </citation>
    <scope>X-RAY CRYSTALLOGRAPHY (2.00 ANGSTROMS) OF 728-879</scope>
    <scope>FUNCTION (METHYLTRANSFERASE/PROTEASE/UBIQUITINYL HYDROLASE)</scope>
    <scope>ACTIVE SITE (METHYLTRANSFERASE/PROTEASE/UBIQUITINYL HYDROLASE)</scope>
    <scope>CATALYTIC ACTIVITY (METHYLTRANSFERASE/PROTEASE/UBIQUITINYL HYDROLASE)</scope>
</reference>
<reference evidence="19 20" key="8">
    <citation type="journal article" date="2017" name="PLoS Pathog.">
        <title>A mobile loop near the active site acts as a switch between the dual activities of a viral protease/deubiquitinase.</title>
        <authorList>
            <person name="Jupin I."/>
            <person name="Ayach M."/>
            <person name="Jomat L."/>
            <person name="Fieulaine S."/>
            <person name="Bressanelli S."/>
        </authorList>
    </citation>
    <scope>X-RAY CRYSTALLOGRAPHY (1.65 ANGSTROMS) OF 728-874</scope>
    <scope>ACTIVE SITE (METHYLTRANSFERASE/PROTEASE/UBIQUITINYL HYDROLASE)</scope>
    <scope>MUTAGENESIS OF ASP-843; ILE-847; GLY-865 AND 866-PRO-PRO-867</scope>
    <scope>DOMAIN (METHYLTRANSFERASE/PROTEASE/UBIQUITINYL HYDROLASE)</scope>
    <scope>FUNCTION (METHYLTRANSFERASE/PROTEASE/UBIQUITINYL HYDROLASE)</scope>
</reference>
<reference evidence="21" key="9">
    <citation type="journal article" date="2020" name="J. Biol. Chem.">
        <title>Turnip yellow mosaic virus protease binds ubiquitin suboptimally to fine-tune its deubiquitinase activity.</title>
        <authorList>
            <person name="Fieulaine S."/>
            <person name="Witte M.D."/>
            <person name="Theile C.S."/>
            <person name="Ayach M."/>
            <person name="Ploegh H.L."/>
            <person name="Jupin I."/>
            <person name="Bressanelli S."/>
        </authorList>
    </citation>
    <scope>X-RAY CRYSTALLOGRAPHY (3.66 ANGSTROMS) OF 728-879 IN COMPLEX WITH UBIQUITIN</scope>
    <scope>FUNCTION (METHYLTRANSFERASE/PROTEASE/UBIQUITINYL HYDROLASE)</scope>
</reference>
<feature type="chain" id="PRO_0000222938" description="Non-structural replication polyprotein">
    <location>
        <begin position="1"/>
        <end position="1844"/>
    </location>
</feature>
<feature type="chain" id="PRO_0000418048" description="Methyltransferase/Protease/Ubiquitinyl hydrolase">
    <location>
        <begin position="1"/>
        <end position="879"/>
    </location>
</feature>
<feature type="chain" id="PRO_0000418049" description="Putative helicase">
    <location>
        <begin position="880"/>
        <end position="1259"/>
    </location>
</feature>
<feature type="chain" id="PRO_0000418050" description="RNA-directed RNA polymerase">
    <location>
        <begin position="1260"/>
        <end position="1844"/>
    </location>
</feature>
<feature type="domain" description="Alphavirus-like MT" evidence="5">
    <location>
        <begin position="58"/>
        <end position="219"/>
    </location>
</feature>
<feature type="domain" description="OTU" evidence="11">
    <location>
        <begin position="728"/>
        <end position="879"/>
    </location>
</feature>
<feature type="domain" description="Peptidase C21" evidence="4">
    <location>
        <begin position="730"/>
        <end position="884"/>
    </location>
</feature>
<feature type="domain" description="(+)RNA virus helicase ATP-binding" evidence="3">
    <location>
        <begin position="946"/>
        <end position="1103"/>
    </location>
</feature>
<feature type="domain" description="(+)RNA virus helicase C-terminal" evidence="3">
    <location>
        <begin position="1104"/>
        <end position="1236"/>
    </location>
</feature>
<feature type="domain" description="RdRp catalytic" evidence="2">
    <location>
        <begin position="1572"/>
        <end position="1678"/>
    </location>
</feature>
<feature type="region of interest" description="Disordered" evidence="6">
    <location>
        <begin position="571"/>
        <end position="739"/>
    </location>
</feature>
<feature type="region of interest" description="Disordered" evidence="6">
    <location>
        <begin position="859"/>
        <end position="887"/>
    </location>
</feature>
<feature type="short sequence motif" description="GPP flap" evidence="13">
    <location>
        <begin position="865"/>
        <end position="867"/>
    </location>
</feature>
<feature type="compositionally biased region" description="Low complexity" evidence="6">
    <location>
        <begin position="609"/>
        <end position="621"/>
    </location>
</feature>
<feature type="compositionally biased region" description="Low complexity" evidence="6">
    <location>
        <begin position="726"/>
        <end position="736"/>
    </location>
</feature>
<feature type="active site" description="For protease activity" evidence="4 9 12 13">
    <location>
        <position position="783"/>
    </location>
</feature>
<feature type="active site" description="For protease activity" evidence="4 12 13">
    <location>
        <position position="869"/>
    </location>
</feature>
<feature type="binding site" evidence="1">
    <location>
        <begin position="976"/>
        <end position="983"/>
    </location>
    <ligand>
        <name>ATP</name>
        <dbReference type="ChEBI" id="CHEBI:30616"/>
    </ligand>
</feature>
<feature type="site" description="Cleavage; by viral protease" evidence="9">
    <location>
        <begin position="879"/>
        <end position="880"/>
    </location>
</feature>
<feature type="site" description="Cleavage; by viral protease" evidence="9">
    <location>
        <begin position="1259"/>
        <end position="1260"/>
    </location>
</feature>
<feature type="mutagenesis site" description="Complete loss of protease activity." evidence="9">
    <original>C</original>
    <variation>S</variation>
    <location>
        <position position="783"/>
    </location>
</feature>
<feature type="mutagenesis site" description="70% loss of deubiquitinase activity." evidence="13">
    <original>D</original>
    <variation>A</variation>
    <location>
        <position position="843"/>
    </location>
</feature>
<feature type="mutagenesis site" description="80% loss of deubiquitinase activity." evidence="13">
    <original>I</original>
    <variation>A</variation>
    <location>
        <position position="847"/>
    </location>
</feature>
<feature type="mutagenesis site" description="Almost complete loss of deubiquitinase activity." evidence="13">
    <original>I</original>
    <variation>D</variation>
    <location>
        <position position="847"/>
    </location>
</feature>
<feature type="mutagenesis site" description="70% loss of deubiquitinase activity." evidence="13">
    <original>G</original>
    <variation>A</variation>
    <location>
        <position position="865"/>
    </location>
</feature>
<feature type="mutagenesis site" description="Almost complete loss of deubiquitinase activity." evidence="13">
    <original>PP</original>
    <variation>GG</variation>
    <location>
        <begin position="866"/>
        <end position="867"/>
    </location>
</feature>
<feature type="helix" evidence="22">
    <location>
        <begin position="734"/>
        <end position="737"/>
    </location>
</feature>
<feature type="strand" evidence="22">
    <location>
        <begin position="742"/>
        <end position="748"/>
    </location>
</feature>
<feature type="helix" evidence="22">
    <location>
        <begin position="749"/>
        <end position="752"/>
    </location>
</feature>
<feature type="strand" evidence="22">
    <location>
        <begin position="765"/>
        <end position="769"/>
    </location>
</feature>
<feature type="helix" evidence="22">
    <location>
        <begin position="783"/>
        <end position="792"/>
    </location>
</feature>
<feature type="helix" evidence="22">
    <location>
        <begin position="796"/>
        <end position="804"/>
    </location>
</feature>
<feature type="helix" evidence="22">
    <location>
        <begin position="809"/>
        <end position="811"/>
    </location>
</feature>
<feature type="helix" evidence="22">
    <location>
        <begin position="815"/>
        <end position="820"/>
    </location>
</feature>
<feature type="helix" evidence="22">
    <location>
        <begin position="824"/>
        <end position="833"/>
    </location>
</feature>
<feature type="strand" evidence="22">
    <location>
        <begin position="836"/>
        <end position="842"/>
    </location>
</feature>
<feature type="strand" evidence="22">
    <location>
        <begin position="845"/>
        <end position="850"/>
    </location>
</feature>
<feature type="strand" evidence="22">
    <location>
        <begin position="855"/>
        <end position="863"/>
    </location>
</feature>
<feature type="strand" evidence="22">
    <location>
        <begin position="865"/>
        <end position="867"/>
    </location>
</feature>
<feature type="strand" evidence="22">
    <location>
        <begin position="869"/>
        <end position="872"/>
    </location>
</feature>
<evidence type="ECO:0000250" key="1"/>
<evidence type="ECO:0000255" key="2">
    <source>
        <dbReference type="PROSITE-ProRule" id="PRU00539"/>
    </source>
</evidence>
<evidence type="ECO:0000255" key="3">
    <source>
        <dbReference type="PROSITE-ProRule" id="PRU00990"/>
    </source>
</evidence>
<evidence type="ECO:0000255" key="4">
    <source>
        <dbReference type="PROSITE-ProRule" id="PRU01074"/>
    </source>
</evidence>
<evidence type="ECO:0000255" key="5">
    <source>
        <dbReference type="PROSITE-ProRule" id="PRU01079"/>
    </source>
</evidence>
<evidence type="ECO:0000256" key="6">
    <source>
        <dbReference type="SAM" id="MobiDB-lite"/>
    </source>
</evidence>
<evidence type="ECO:0000269" key="7">
    <source>
    </source>
</evidence>
<evidence type="ECO:0000269" key="8">
    <source>
    </source>
</evidence>
<evidence type="ECO:0000269" key="9">
    <source>
    </source>
</evidence>
<evidence type="ECO:0000269" key="10">
    <source>
    </source>
</evidence>
<evidence type="ECO:0000269" key="11">
    <source>
    </source>
</evidence>
<evidence type="ECO:0000269" key="12">
    <source>
    </source>
</evidence>
<evidence type="ECO:0000269" key="13">
    <source>
    </source>
</evidence>
<evidence type="ECO:0000269" key="14">
    <source>
    </source>
</evidence>
<evidence type="ECO:0000303" key="15">
    <source>
    </source>
</evidence>
<evidence type="ECO:0000305" key="16"/>
<evidence type="ECO:0000305" key="17">
    <source>
    </source>
</evidence>
<evidence type="ECO:0007744" key="18">
    <source>
        <dbReference type="PDB" id="4A5U"/>
    </source>
</evidence>
<evidence type="ECO:0007744" key="19">
    <source>
        <dbReference type="PDB" id="5LW5"/>
    </source>
</evidence>
<evidence type="ECO:0007744" key="20">
    <source>
        <dbReference type="PDB" id="5LWA"/>
    </source>
</evidence>
<evidence type="ECO:0007744" key="21">
    <source>
        <dbReference type="PDB" id="6YPT"/>
    </source>
</evidence>
<evidence type="ECO:0007829" key="22">
    <source>
        <dbReference type="PDB" id="5LW5"/>
    </source>
</evidence>